<evidence type="ECO:0000255" key="1">
    <source>
        <dbReference type="HAMAP-Rule" id="MF_00108"/>
    </source>
</evidence>
<evidence type="ECO:0000305" key="2"/>
<comment type="function">
    <text evidence="1">Catalyzes the formation of 4-diphosphocytidyl-2-C-methyl-D-erythritol from CTP and 2-C-methyl-D-erythritol 4-phosphate (MEP).</text>
</comment>
<comment type="catalytic activity">
    <reaction evidence="1">
        <text>2-C-methyl-D-erythritol 4-phosphate + CTP + H(+) = 4-CDP-2-C-methyl-D-erythritol + diphosphate</text>
        <dbReference type="Rhea" id="RHEA:13429"/>
        <dbReference type="ChEBI" id="CHEBI:15378"/>
        <dbReference type="ChEBI" id="CHEBI:33019"/>
        <dbReference type="ChEBI" id="CHEBI:37563"/>
        <dbReference type="ChEBI" id="CHEBI:57823"/>
        <dbReference type="ChEBI" id="CHEBI:58262"/>
        <dbReference type="EC" id="2.7.7.60"/>
    </reaction>
</comment>
<comment type="pathway">
    <text evidence="1">Isoprenoid biosynthesis; isopentenyl diphosphate biosynthesis via DXP pathway; isopentenyl diphosphate from 1-deoxy-D-xylulose 5-phosphate: step 2/6.</text>
</comment>
<comment type="similarity">
    <text evidence="1">Belongs to the IspD/TarI cytidylyltransferase family. IspD subfamily.</text>
</comment>
<comment type="sequence caution" evidence="2">
    <conflict type="erroneous initiation">
        <sequence resource="EMBL-CDS" id="AAO37076"/>
    </conflict>
</comment>
<accession>Q890M1</accession>
<keyword id="KW-0414">Isoprene biosynthesis</keyword>
<keyword id="KW-0548">Nucleotidyltransferase</keyword>
<keyword id="KW-1185">Reference proteome</keyword>
<keyword id="KW-0808">Transferase</keyword>
<gene>
    <name evidence="1" type="primary">ispD</name>
    <name type="ordered locus">CTC_02626</name>
</gene>
<reference key="1">
    <citation type="journal article" date="2003" name="Proc. Natl. Acad. Sci. U.S.A.">
        <title>The genome sequence of Clostridium tetani, the causative agent of tetanus disease.</title>
        <authorList>
            <person name="Brueggemann H."/>
            <person name="Baeumer S."/>
            <person name="Fricke W.F."/>
            <person name="Wiezer A."/>
            <person name="Liesegang H."/>
            <person name="Decker I."/>
            <person name="Herzberg C."/>
            <person name="Martinez-Arias R."/>
            <person name="Merkl R."/>
            <person name="Henne A."/>
            <person name="Gottschalk G."/>
        </authorList>
    </citation>
    <scope>NUCLEOTIDE SEQUENCE [LARGE SCALE GENOMIC DNA]</scope>
    <source>
        <strain>Massachusetts / E88</strain>
    </source>
</reference>
<sequence length="246" mass="27969">MTRIELKGVWKLSKNCAIIVAAGKGSRMGFDINKVFIEIGEKPIIQYSLECFESHPDIDEIVLVAKLNEIEKFQHIIKSNNMKKVKKIVVGGNTRRESVVNALSVIKDSDVVVIHDGARPFISHDLISKGIKYANKYGACTCGVTPKDTIKVKDKLNFIKESLNRDFLISVQTPQSFKYKLIWEGHNHKIDENINITDDTSLMEYLGHNVFVYNGEYTNIKITTKEDLIFAEEFVKKFNNVKNSLT</sequence>
<dbReference type="EC" id="2.7.7.60" evidence="1"/>
<dbReference type="EMBL" id="AE015927">
    <property type="protein sequence ID" value="AAO37076.1"/>
    <property type="status" value="ALT_INIT"/>
    <property type="molecule type" value="Genomic_DNA"/>
</dbReference>
<dbReference type="SMR" id="Q890M1"/>
<dbReference type="STRING" id="212717.CTC_02626"/>
<dbReference type="KEGG" id="ctc:CTC_02626"/>
<dbReference type="HOGENOM" id="CLU_061281_2_2_9"/>
<dbReference type="UniPathway" id="UPA00056">
    <property type="reaction ID" value="UER00093"/>
</dbReference>
<dbReference type="Proteomes" id="UP000001412">
    <property type="component" value="Chromosome"/>
</dbReference>
<dbReference type="GO" id="GO:0050518">
    <property type="term" value="F:2-C-methyl-D-erythritol 4-phosphate cytidylyltransferase activity"/>
    <property type="evidence" value="ECO:0007669"/>
    <property type="project" value="UniProtKB-UniRule"/>
</dbReference>
<dbReference type="GO" id="GO:0019288">
    <property type="term" value="P:isopentenyl diphosphate biosynthetic process, methylerythritol 4-phosphate pathway"/>
    <property type="evidence" value="ECO:0007669"/>
    <property type="project" value="UniProtKB-UniRule"/>
</dbReference>
<dbReference type="CDD" id="cd02516">
    <property type="entry name" value="CDP-ME_synthetase"/>
    <property type="match status" value="1"/>
</dbReference>
<dbReference type="FunFam" id="3.90.550.10:FF:000003">
    <property type="entry name" value="2-C-methyl-D-erythritol 4-phosphate cytidylyltransferase"/>
    <property type="match status" value="1"/>
</dbReference>
<dbReference type="Gene3D" id="3.90.550.10">
    <property type="entry name" value="Spore Coat Polysaccharide Biosynthesis Protein SpsA, Chain A"/>
    <property type="match status" value="1"/>
</dbReference>
<dbReference type="HAMAP" id="MF_00108">
    <property type="entry name" value="IspD"/>
    <property type="match status" value="1"/>
</dbReference>
<dbReference type="InterPro" id="IPR001228">
    <property type="entry name" value="IspD"/>
</dbReference>
<dbReference type="InterPro" id="IPR034683">
    <property type="entry name" value="IspD/TarI"/>
</dbReference>
<dbReference type="InterPro" id="IPR050088">
    <property type="entry name" value="IspD/TarI_cytidylyltransf_bact"/>
</dbReference>
<dbReference type="InterPro" id="IPR018294">
    <property type="entry name" value="ISPD_synthase_CS"/>
</dbReference>
<dbReference type="InterPro" id="IPR029044">
    <property type="entry name" value="Nucleotide-diphossugar_trans"/>
</dbReference>
<dbReference type="NCBIfam" id="TIGR00453">
    <property type="entry name" value="ispD"/>
    <property type="match status" value="1"/>
</dbReference>
<dbReference type="PANTHER" id="PTHR32125">
    <property type="entry name" value="2-C-METHYL-D-ERYTHRITOL 4-PHOSPHATE CYTIDYLYLTRANSFERASE, CHLOROPLASTIC"/>
    <property type="match status" value="1"/>
</dbReference>
<dbReference type="PANTHER" id="PTHR32125:SF4">
    <property type="entry name" value="2-C-METHYL-D-ERYTHRITOL 4-PHOSPHATE CYTIDYLYLTRANSFERASE, CHLOROPLASTIC"/>
    <property type="match status" value="1"/>
</dbReference>
<dbReference type="Pfam" id="PF01128">
    <property type="entry name" value="IspD"/>
    <property type="match status" value="1"/>
</dbReference>
<dbReference type="SUPFAM" id="SSF53448">
    <property type="entry name" value="Nucleotide-diphospho-sugar transferases"/>
    <property type="match status" value="1"/>
</dbReference>
<dbReference type="PROSITE" id="PS01295">
    <property type="entry name" value="ISPD"/>
    <property type="match status" value="1"/>
</dbReference>
<protein>
    <recommendedName>
        <fullName evidence="1">2-C-methyl-D-erythritol 4-phosphate cytidylyltransferase</fullName>
        <ecNumber evidence="1">2.7.7.60</ecNumber>
    </recommendedName>
    <alternativeName>
        <fullName evidence="1">4-diphosphocytidyl-2C-methyl-D-erythritol synthase</fullName>
    </alternativeName>
    <alternativeName>
        <fullName evidence="1">MEP cytidylyltransferase</fullName>
        <shortName evidence="1">MCT</shortName>
    </alternativeName>
</protein>
<organism>
    <name type="scientific">Clostridium tetani (strain Massachusetts / E88)</name>
    <dbReference type="NCBI Taxonomy" id="212717"/>
    <lineage>
        <taxon>Bacteria</taxon>
        <taxon>Bacillati</taxon>
        <taxon>Bacillota</taxon>
        <taxon>Clostridia</taxon>
        <taxon>Eubacteriales</taxon>
        <taxon>Clostridiaceae</taxon>
        <taxon>Clostridium</taxon>
    </lineage>
</organism>
<name>ISPD_CLOTE</name>
<proteinExistence type="inferred from homology"/>
<feature type="chain" id="PRO_0000075567" description="2-C-methyl-D-erythritol 4-phosphate cytidylyltransferase">
    <location>
        <begin position="1"/>
        <end position="246"/>
    </location>
</feature>
<feature type="site" description="Transition state stabilizer" evidence="1">
    <location>
        <position position="27"/>
    </location>
</feature>
<feature type="site" description="Transition state stabilizer" evidence="1">
    <location>
        <position position="34"/>
    </location>
</feature>
<feature type="site" description="Positions MEP for the nucleophilic attack" evidence="1">
    <location>
        <position position="165"/>
    </location>
</feature>
<feature type="site" description="Positions MEP for the nucleophilic attack" evidence="1">
    <location>
        <position position="221"/>
    </location>
</feature>